<proteinExistence type="inferred from homology"/>
<gene>
    <name evidence="1" type="primary">rplT</name>
    <name type="ordered locus">Nwi_0067</name>
</gene>
<feature type="chain" id="PRO_0000243706" description="Large ribosomal subunit protein bL20">
    <location>
        <begin position="1"/>
        <end position="119"/>
    </location>
</feature>
<dbReference type="EMBL" id="CP000115">
    <property type="protein sequence ID" value="ABA03335.1"/>
    <property type="molecule type" value="Genomic_DNA"/>
</dbReference>
<dbReference type="RefSeq" id="WP_009796601.1">
    <property type="nucleotide sequence ID" value="NC_007406.1"/>
</dbReference>
<dbReference type="SMR" id="Q3SWK6"/>
<dbReference type="STRING" id="323098.Nwi_0067"/>
<dbReference type="KEGG" id="nwi:Nwi_0067"/>
<dbReference type="eggNOG" id="COG0292">
    <property type="taxonomic scope" value="Bacteria"/>
</dbReference>
<dbReference type="HOGENOM" id="CLU_123265_0_1_5"/>
<dbReference type="OrthoDB" id="9808966at2"/>
<dbReference type="Proteomes" id="UP000002531">
    <property type="component" value="Chromosome"/>
</dbReference>
<dbReference type="GO" id="GO:1990904">
    <property type="term" value="C:ribonucleoprotein complex"/>
    <property type="evidence" value="ECO:0007669"/>
    <property type="project" value="UniProtKB-KW"/>
</dbReference>
<dbReference type="GO" id="GO:0005840">
    <property type="term" value="C:ribosome"/>
    <property type="evidence" value="ECO:0007669"/>
    <property type="project" value="UniProtKB-KW"/>
</dbReference>
<dbReference type="GO" id="GO:0019843">
    <property type="term" value="F:rRNA binding"/>
    <property type="evidence" value="ECO:0007669"/>
    <property type="project" value="UniProtKB-UniRule"/>
</dbReference>
<dbReference type="GO" id="GO:0003735">
    <property type="term" value="F:structural constituent of ribosome"/>
    <property type="evidence" value="ECO:0007669"/>
    <property type="project" value="InterPro"/>
</dbReference>
<dbReference type="GO" id="GO:0000027">
    <property type="term" value="P:ribosomal large subunit assembly"/>
    <property type="evidence" value="ECO:0007669"/>
    <property type="project" value="UniProtKB-UniRule"/>
</dbReference>
<dbReference type="GO" id="GO:0006412">
    <property type="term" value="P:translation"/>
    <property type="evidence" value="ECO:0007669"/>
    <property type="project" value="InterPro"/>
</dbReference>
<dbReference type="CDD" id="cd07026">
    <property type="entry name" value="Ribosomal_L20"/>
    <property type="match status" value="1"/>
</dbReference>
<dbReference type="FunFam" id="1.10.1900.20:FF:000001">
    <property type="entry name" value="50S ribosomal protein L20"/>
    <property type="match status" value="1"/>
</dbReference>
<dbReference type="Gene3D" id="6.10.160.10">
    <property type="match status" value="1"/>
</dbReference>
<dbReference type="Gene3D" id="1.10.1900.20">
    <property type="entry name" value="Ribosomal protein L20"/>
    <property type="match status" value="1"/>
</dbReference>
<dbReference type="HAMAP" id="MF_00382">
    <property type="entry name" value="Ribosomal_bL20"/>
    <property type="match status" value="1"/>
</dbReference>
<dbReference type="InterPro" id="IPR005813">
    <property type="entry name" value="Ribosomal_bL20"/>
</dbReference>
<dbReference type="InterPro" id="IPR049946">
    <property type="entry name" value="RIBOSOMAL_L20_CS"/>
</dbReference>
<dbReference type="InterPro" id="IPR035566">
    <property type="entry name" value="Ribosomal_protein_bL20_C"/>
</dbReference>
<dbReference type="NCBIfam" id="TIGR01032">
    <property type="entry name" value="rplT_bact"/>
    <property type="match status" value="1"/>
</dbReference>
<dbReference type="PANTHER" id="PTHR10986">
    <property type="entry name" value="39S RIBOSOMAL PROTEIN L20"/>
    <property type="match status" value="1"/>
</dbReference>
<dbReference type="Pfam" id="PF00453">
    <property type="entry name" value="Ribosomal_L20"/>
    <property type="match status" value="1"/>
</dbReference>
<dbReference type="PRINTS" id="PR00062">
    <property type="entry name" value="RIBOSOMALL20"/>
</dbReference>
<dbReference type="SUPFAM" id="SSF74731">
    <property type="entry name" value="Ribosomal protein L20"/>
    <property type="match status" value="1"/>
</dbReference>
<dbReference type="PROSITE" id="PS00937">
    <property type="entry name" value="RIBOSOMAL_L20"/>
    <property type="match status" value="1"/>
</dbReference>
<name>RL20_NITWN</name>
<comment type="function">
    <text evidence="1">Binds directly to 23S ribosomal RNA and is necessary for the in vitro assembly process of the 50S ribosomal subunit. It is not involved in the protein synthesizing functions of that subunit.</text>
</comment>
<comment type="similarity">
    <text evidence="1">Belongs to the bacterial ribosomal protein bL20 family.</text>
</comment>
<accession>Q3SWK6</accession>
<evidence type="ECO:0000255" key="1">
    <source>
        <dbReference type="HAMAP-Rule" id="MF_00382"/>
    </source>
</evidence>
<evidence type="ECO:0000305" key="2"/>
<reference key="1">
    <citation type="journal article" date="2006" name="Appl. Environ. Microbiol.">
        <title>Genome sequence of the chemolithoautotrophic nitrite-oxidizing bacterium Nitrobacter winogradskyi Nb-255.</title>
        <authorList>
            <person name="Starkenburg S.R."/>
            <person name="Chain P.S.G."/>
            <person name="Sayavedra-Soto L.A."/>
            <person name="Hauser L."/>
            <person name="Land M.L."/>
            <person name="Larimer F.W."/>
            <person name="Malfatti S.A."/>
            <person name="Klotz M.G."/>
            <person name="Bottomley P.J."/>
            <person name="Arp D.J."/>
            <person name="Hickey W.J."/>
        </authorList>
    </citation>
    <scope>NUCLEOTIDE SEQUENCE [LARGE SCALE GENOMIC DNA]</scope>
    <source>
        <strain>ATCC 25391 / DSM 10237 / CIP 104748 / NCIMB 11846 / Nb-255</strain>
    </source>
</reference>
<keyword id="KW-1185">Reference proteome</keyword>
<keyword id="KW-0687">Ribonucleoprotein</keyword>
<keyword id="KW-0689">Ribosomal protein</keyword>
<keyword id="KW-0694">RNA-binding</keyword>
<keyword id="KW-0699">rRNA-binding</keyword>
<organism>
    <name type="scientific">Nitrobacter winogradskyi (strain ATCC 25391 / DSM 10237 / CIP 104748 / NCIMB 11846 / Nb-255)</name>
    <dbReference type="NCBI Taxonomy" id="323098"/>
    <lineage>
        <taxon>Bacteria</taxon>
        <taxon>Pseudomonadati</taxon>
        <taxon>Pseudomonadota</taxon>
        <taxon>Alphaproteobacteria</taxon>
        <taxon>Hyphomicrobiales</taxon>
        <taxon>Nitrobacteraceae</taxon>
        <taxon>Nitrobacter</taxon>
    </lineage>
</organism>
<protein>
    <recommendedName>
        <fullName evidence="1">Large ribosomal subunit protein bL20</fullName>
    </recommendedName>
    <alternativeName>
        <fullName evidence="2">50S ribosomal protein L20</fullName>
    </alternativeName>
</protein>
<sequence length="119" mass="13234">MARVKRGVTAHAKHKKVYKVTKGFSGRRKNTIRAAKAAADKAGQYAFRDRKRKKRTFRALWIQRLNAAVRPFGMTYSRFIDGLSKSGITVDRKVLSDLAINEPAAFQAIAEKAKAALAA</sequence>